<geneLocation type="plasmid">
    <name>sym pNGR234a</name>
</geneLocation>
<protein>
    <recommendedName>
        <fullName>Uncharacterized protein y4jN</fullName>
    </recommendedName>
</protein>
<sequence length="146" mass="16320">MLSATDLANRKFGSGDRIHVGGKAAARYGYDLSSSRSAHVAAADHLIGWFLAGFRQRIHKPFMLRTVQCDRIYVLAGPNLEAQWDVVAWTKLVHEPAYAVGLVSRWVLMTSHHMSCVVQGSRLGNRPRKCVMQRFSVAMRNIVRVG</sequence>
<keyword id="KW-0614">Plasmid</keyword>
<keyword id="KW-1185">Reference proteome</keyword>
<dbReference type="EMBL" id="U00090">
    <property type="protein sequence ID" value="AAB91726.1"/>
    <property type="molecule type" value="Genomic_DNA"/>
</dbReference>
<dbReference type="PIR" id="T28641">
    <property type="entry name" value="T28641"/>
</dbReference>
<dbReference type="RefSeq" id="NP_443924.1">
    <property type="nucleotide sequence ID" value="NC_000914.2"/>
</dbReference>
<dbReference type="KEGG" id="rhi:NGR_a03010"/>
<dbReference type="HOGENOM" id="CLU_1775936_0_0_5"/>
<dbReference type="Proteomes" id="UP000001054">
    <property type="component" value="Plasmid pNGR234a"/>
</dbReference>
<name>Y4JN_SINFN</name>
<proteinExistence type="predicted"/>
<accession>P55514</accession>
<reference key="1">
    <citation type="journal article" date="1997" name="Nature">
        <title>Molecular basis of symbiosis between Rhizobium and legumes.</title>
        <authorList>
            <person name="Freiberg C.A."/>
            <person name="Fellay R."/>
            <person name="Bairoch A."/>
            <person name="Broughton W.J."/>
            <person name="Rosenthal A."/>
            <person name="Perret X."/>
        </authorList>
    </citation>
    <scope>NUCLEOTIDE SEQUENCE [LARGE SCALE GENOMIC DNA]</scope>
    <source>
        <strain>NBRC 101917 / NGR234</strain>
    </source>
</reference>
<reference key="2">
    <citation type="journal article" date="2009" name="Appl. Environ. Microbiol.">
        <title>Rhizobium sp. strain NGR234 possesses a remarkable number of secretion systems.</title>
        <authorList>
            <person name="Schmeisser C."/>
            <person name="Liesegang H."/>
            <person name="Krysciak D."/>
            <person name="Bakkou N."/>
            <person name="Le Quere A."/>
            <person name="Wollherr A."/>
            <person name="Heinemeyer I."/>
            <person name="Morgenstern B."/>
            <person name="Pommerening-Roeser A."/>
            <person name="Flores M."/>
            <person name="Palacios R."/>
            <person name="Brenner S."/>
            <person name="Gottschalk G."/>
            <person name="Schmitz R.A."/>
            <person name="Broughton W.J."/>
            <person name="Perret X."/>
            <person name="Strittmatter A.W."/>
            <person name="Streit W.R."/>
        </authorList>
    </citation>
    <scope>NUCLEOTIDE SEQUENCE [LARGE SCALE GENOMIC DNA]</scope>
    <source>
        <strain>NBRC 101917 / NGR234</strain>
    </source>
</reference>
<organism>
    <name type="scientific">Sinorhizobium fredii (strain NBRC 101917 / NGR234)</name>
    <dbReference type="NCBI Taxonomy" id="394"/>
    <lineage>
        <taxon>Bacteria</taxon>
        <taxon>Pseudomonadati</taxon>
        <taxon>Pseudomonadota</taxon>
        <taxon>Alphaproteobacteria</taxon>
        <taxon>Hyphomicrobiales</taxon>
        <taxon>Rhizobiaceae</taxon>
        <taxon>Sinorhizobium/Ensifer group</taxon>
        <taxon>Sinorhizobium</taxon>
    </lineage>
</organism>
<gene>
    <name type="ordered locus">NGR_a03010</name>
    <name type="ORF">y4jN</name>
</gene>
<feature type="chain" id="PRO_0000200880" description="Uncharacterized protein y4jN">
    <location>
        <begin position="1"/>
        <end position="146"/>
    </location>
</feature>